<name>RS7_STAA1</name>
<gene>
    <name evidence="1" type="primary">rpsG</name>
    <name type="ordered locus">SAHV_0544</name>
</gene>
<organism>
    <name type="scientific">Staphylococcus aureus (strain Mu3 / ATCC 700698)</name>
    <dbReference type="NCBI Taxonomy" id="418127"/>
    <lineage>
        <taxon>Bacteria</taxon>
        <taxon>Bacillati</taxon>
        <taxon>Bacillota</taxon>
        <taxon>Bacilli</taxon>
        <taxon>Bacillales</taxon>
        <taxon>Staphylococcaceae</taxon>
        <taxon>Staphylococcus</taxon>
    </lineage>
</organism>
<proteinExistence type="inferred from homology"/>
<comment type="function">
    <text evidence="1">One of the primary rRNA binding proteins, it binds directly to 16S rRNA where it nucleates assembly of the head domain of the 30S subunit. Is located at the subunit interface close to the decoding center, probably blocks exit of the E-site tRNA.</text>
</comment>
<comment type="subunit">
    <text evidence="1">Part of the 30S ribosomal subunit. Contacts proteins S9 and S11.</text>
</comment>
<comment type="similarity">
    <text evidence="1">Belongs to the universal ribosomal protein uS7 family.</text>
</comment>
<sequence length="156" mass="17795">MPRKGSVPKRDVLPDPIHNSKLVTKLINKIMLDGKRGTAQRILYSAFDLVEQRSGRDALEVFEEAINNIMPVLEVKARRVGGSNYQVPVEVRPERRTTLGLRWLVNYARLRGEKTMEDRLANEILDAANNTGGAVKKREDTHKMAEANKAFAHYRW</sequence>
<evidence type="ECO:0000255" key="1">
    <source>
        <dbReference type="HAMAP-Rule" id="MF_00480"/>
    </source>
</evidence>
<evidence type="ECO:0000305" key="2"/>
<dbReference type="EMBL" id="AP009324">
    <property type="protein sequence ID" value="BAF77427.1"/>
    <property type="molecule type" value="Genomic_DNA"/>
</dbReference>
<dbReference type="RefSeq" id="WP_001137495.1">
    <property type="nucleotide sequence ID" value="NZ_CTYB01000013.1"/>
</dbReference>
<dbReference type="SMR" id="A7WYX3"/>
<dbReference type="GeneID" id="98344880"/>
<dbReference type="KEGG" id="saw:SAHV_0544"/>
<dbReference type="HOGENOM" id="CLU_072226_1_1_9"/>
<dbReference type="GO" id="GO:0015935">
    <property type="term" value="C:small ribosomal subunit"/>
    <property type="evidence" value="ECO:0007669"/>
    <property type="project" value="InterPro"/>
</dbReference>
<dbReference type="GO" id="GO:0019843">
    <property type="term" value="F:rRNA binding"/>
    <property type="evidence" value="ECO:0007669"/>
    <property type="project" value="UniProtKB-UniRule"/>
</dbReference>
<dbReference type="GO" id="GO:0003735">
    <property type="term" value="F:structural constituent of ribosome"/>
    <property type="evidence" value="ECO:0007669"/>
    <property type="project" value="InterPro"/>
</dbReference>
<dbReference type="GO" id="GO:0000049">
    <property type="term" value="F:tRNA binding"/>
    <property type="evidence" value="ECO:0007669"/>
    <property type="project" value="UniProtKB-UniRule"/>
</dbReference>
<dbReference type="GO" id="GO:0006412">
    <property type="term" value="P:translation"/>
    <property type="evidence" value="ECO:0007669"/>
    <property type="project" value="UniProtKB-UniRule"/>
</dbReference>
<dbReference type="CDD" id="cd14869">
    <property type="entry name" value="uS7_Bacteria"/>
    <property type="match status" value="1"/>
</dbReference>
<dbReference type="FunFam" id="1.10.455.10:FF:000001">
    <property type="entry name" value="30S ribosomal protein S7"/>
    <property type="match status" value="1"/>
</dbReference>
<dbReference type="Gene3D" id="1.10.455.10">
    <property type="entry name" value="Ribosomal protein S7 domain"/>
    <property type="match status" value="1"/>
</dbReference>
<dbReference type="HAMAP" id="MF_00480_B">
    <property type="entry name" value="Ribosomal_uS7_B"/>
    <property type="match status" value="1"/>
</dbReference>
<dbReference type="InterPro" id="IPR000235">
    <property type="entry name" value="Ribosomal_uS7"/>
</dbReference>
<dbReference type="InterPro" id="IPR005717">
    <property type="entry name" value="Ribosomal_uS7_bac/org-type"/>
</dbReference>
<dbReference type="InterPro" id="IPR020606">
    <property type="entry name" value="Ribosomal_uS7_CS"/>
</dbReference>
<dbReference type="InterPro" id="IPR023798">
    <property type="entry name" value="Ribosomal_uS7_dom"/>
</dbReference>
<dbReference type="InterPro" id="IPR036823">
    <property type="entry name" value="Ribosomal_uS7_dom_sf"/>
</dbReference>
<dbReference type="NCBIfam" id="TIGR01029">
    <property type="entry name" value="rpsG_bact"/>
    <property type="match status" value="1"/>
</dbReference>
<dbReference type="PANTHER" id="PTHR11205">
    <property type="entry name" value="RIBOSOMAL PROTEIN S7"/>
    <property type="match status" value="1"/>
</dbReference>
<dbReference type="Pfam" id="PF00177">
    <property type="entry name" value="Ribosomal_S7"/>
    <property type="match status" value="1"/>
</dbReference>
<dbReference type="PIRSF" id="PIRSF002122">
    <property type="entry name" value="RPS7p_RPS7a_RPS5e_RPS7o"/>
    <property type="match status" value="1"/>
</dbReference>
<dbReference type="SUPFAM" id="SSF47973">
    <property type="entry name" value="Ribosomal protein S7"/>
    <property type="match status" value="1"/>
</dbReference>
<dbReference type="PROSITE" id="PS00052">
    <property type="entry name" value="RIBOSOMAL_S7"/>
    <property type="match status" value="1"/>
</dbReference>
<feature type="chain" id="PRO_1000014297" description="Small ribosomal subunit protein uS7">
    <location>
        <begin position="1"/>
        <end position="156"/>
    </location>
</feature>
<keyword id="KW-0687">Ribonucleoprotein</keyword>
<keyword id="KW-0689">Ribosomal protein</keyword>
<keyword id="KW-0694">RNA-binding</keyword>
<keyword id="KW-0699">rRNA-binding</keyword>
<keyword id="KW-0820">tRNA-binding</keyword>
<reference key="1">
    <citation type="journal article" date="2008" name="Antimicrob. Agents Chemother.">
        <title>Mutated response regulator graR is responsible for phenotypic conversion of Staphylococcus aureus from heterogeneous vancomycin-intermediate resistance to vancomycin-intermediate resistance.</title>
        <authorList>
            <person name="Neoh H.-M."/>
            <person name="Cui L."/>
            <person name="Yuzawa H."/>
            <person name="Takeuchi F."/>
            <person name="Matsuo M."/>
            <person name="Hiramatsu K."/>
        </authorList>
    </citation>
    <scope>NUCLEOTIDE SEQUENCE [LARGE SCALE GENOMIC DNA]</scope>
    <source>
        <strain>Mu3 / ATCC 700698</strain>
    </source>
</reference>
<accession>A7WYX3</accession>
<protein>
    <recommendedName>
        <fullName evidence="1">Small ribosomal subunit protein uS7</fullName>
    </recommendedName>
    <alternativeName>
        <fullName evidence="2">30S ribosomal protein S7</fullName>
    </alternativeName>
</protein>